<keyword id="KW-0349">Heme</keyword>
<keyword id="KW-0408">Iron</keyword>
<keyword id="KW-0479">Metal-binding</keyword>
<keyword id="KW-0561">Oxygen transport</keyword>
<keyword id="KW-0813">Transport</keyword>
<name>HBB2_XENBO</name>
<gene>
    <name type="primary">hbb2</name>
</gene>
<organism>
    <name type="scientific">Xenopus borealis</name>
    <name type="common">Kenyan clawed frog</name>
    <dbReference type="NCBI Taxonomy" id="8354"/>
    <lineage>
        <taxon>Eukaryota</taxon>
        <taxon>Metazoa</taxon>
        <taxon>Chordata</taxon>
        <taxon>Craniata</taxon>
        <taxon>Vertebrata</taxon>
        <taxon>Euteleostomi</taxon>
        <taxon>Amphibia</taxon>
        <taxon>Batrachia</taxon>
        <taxon>Anura</taxon>
        <taxon>Pipoidea</taxon>
        <taxon>Pipidae</taxon>
        <taxon>Xenopodinae</taxon>
        <taxon>Xenopus</taxon>
        <taxon>Xenopus</taxon>
    </lineage>
</organism>
<accession>P07433</accession>
<evidence type="ECO:0000255" key="1">
    <source>
        <dbReference type="PROSITE-ProRule" id="PRU00238"/>
    </source>
</evidence>
<protein>
    <recommendedName>
        <fullName>Hemoglobin subunit beta-2</fullName>
    </recommendedName>
    <alternativeName>
        <fullName>Beta-2-globin</fullName>
    </alternativeName>
    <alternativeName>
        <fullName>Hemoglobin beta-2 chain</fullName>
    </alternativeName>
    <alternativeName>
        <fullName>Hemoglobin beta-minor chain</fullName>
    </alternativeName>
</protein>
<proteinExistence type="evidence at transcript level"/>
<dbReference type="EMBL" id="M32458">
    <property type="protein sequence ID" value="AAA49661.1"/>
    <property type="molecule type" value="mRNA"/>
</dbReference>
<dbReference type="PIR" id="F25929">
    <property type="entry name" value="F25929"/>
</dbReference>
<dbReference type="SMR" id="P07433"/>
<dbReference type="GO" id="GO:0072562">
    <property type="term" value="C:blood microparticle"/>
    <property type="evidence" value="ECO:0007669"/>
    <property type="project" value="TreeGrafter"/>
</dbReference>
<dbReference type="GO" id="GO:0031838">
    <property type="term" value="C:haptoglobin-hemoglobin complex"/>
    <property type="evidence" value="ECO:0007669"/>
    <property type="project" value="TreeGrafter"/>
</dbReference>
<dbReference type="GO" id="GO:0005833">
    <property type="term" value="C:hemoglobin complex"/>
    <property type="evidence" value="ECO:0007669"/>
    <property type="project" value="InterPro"/>
</dbReference>
<dbReference type="GO" id="GO:0031720">
    <property type="term" value="F:haptoglobin binding"/>
    <property type="evidence" value="ECO:0007669"/>
    <property type="project" value="TreeGrafter"/>
</dbReference>
<dbReference type="GO" id="GO:0020037">
    <property type="term" value="F:heme binding"/>
    <property type="evidence" value="ECO:0007669"/>
    <property type="project" value="InterPro"/>
</dbReference>
<dbReference type="GO" id="GO:0046872">
    <property type="term" value="F:metal ion binding"/>
    <property type="evidence" value="ECO:0007669"/>
    <property type="project" value="UniProtKB-KW"/>
</dbReference>
<dbReference type="GO" id="GO:0043177">
    <property type="term" value="F:organic acid binding"/>
    <property type="evidence" value="ECO:0007669"/>
    <property type="project" value="TreeGrafter"/>
</dbReference>
<dbReference type="GO" id="GO:0019825">
    <property type="term" value="F:oxygen binding"/>
    <property type="evidence" value="ECO:0007669"/>
    <property type="project" value="InterPro"/>
</dbReference>
<dbReference type="GO" id="GO:0005344">
    <property type="term" value="F:oxygen carrier activity"/>
    <property type="evidence" value="ECO:0007669"/>
    <property type="project" value="UniProtKB-KW"/>
</dbReference>
<dbReference type="GO" id="GO:0004601">
    <property type="term" value="F:peroxidase activity"/>
    <property type="evidence" value="ECO:0007669"/>
    <property type="project" value="TreeGrafter"/>
</dbReference>
<dbReference type="GO" id="GO:0042744">
    <property type="term" value="P:hydrogen peroxide catabolic process"/>
    <property type="evidence" value="ECO:0007669"/>
    <property type="project" value="TreeGrafter"/>
</dbReference>
<dbReference type="CDD" id="cd08925">
    <property type="entry name" value="Hb-beta-like"/>
    <property type="match status" value="1"/>
</dbReference>
<dbReference type="Gene3D" id="1.10.490.10">
    <property type="entry name" value="Globins"/>
    <property type="match status" value="1"/>
</dbReference>
<dbReference type="InterPro" id="IPR000971">
    <property type="entry name" value="Globin"/>
</dbReference>
<dbReference type="InterPro" id="IPR009050">
    <property type="entry name" value="Globin-like_sf"/>
</dbReference>
<dbReference type="InterPro" id="IPR012292">
    <property type="entry name" value="Globin/Proto"/>
</dbReference>
<dbReference type="InterPro" id="IPR002337">
    <property type="entry name" value="Hemoglobin_b"/>
</dbReference>
<dbReference type="InterPro" id="IPR050056">
    <property type="entry name" value="Hemoglobin_oxygen_transport"/>
</dbReference>
<dbReference type="PANTHER" id="PTHR11442">
    <property type="entry name" value="HEMOGLOBIN FAMILY MEMBER"/>
    <property type="match status" value="1"/>
</dbReference>
<dbReference type="PANTHER" id="PTHR11442:SF100">
    <property type="entry name" value="HEMOGLOBIN SUBUNIT BETA-1"/>
    <property type="match status" value="1"/>
</dbReference>
<dbReference type="Pfam" id="PF00042">
    <property type="entry name" value="Globin"/>
    <property type="match status" value="1"/>
</dbReference>
<dbReference type="PRINTS" id="PR00814">
    <property type="entry name" value="BETAHAEM"/>
</dbReference>
<dbReference type="SUPFAM" id="SSF46458">
    <property type="entry name" value="Globin-like"/>
    <property type="match status" value="1"/>
</dbReference>
<dbReference type="PROSITE" id="PS01033">
    <property type="entry name" value="GLOBIN"/>
    <property type="match status" value="1"/>
</dbReference>
<comment type="function">
    <text>Involved in oxygen transport from the lung to the various peripheral tissues.</text>
</comment>
<comment type="subunit">
    <text>Heterotetramer of two alpha chains and two beta chains.</text>
</comment>
<comment type="tissue specificity">
    <text>Red blood cells.</text>
</comment>
<comment type="similarity">
    <text evidence="1">Belongs to the globin family.</text>
</comment>
<sequence>MGLTAHEKQLITGSWGKINAKAIGKEALGRLLNTFPWTQRYFSSFGNLGSAEAIFHNEAVAAHGEKVVTSVGEAIKHMDDIKGYYAELSKYHSETLHVDPNNFKRFGGCLSITLGHHFGEEYTPELHAAYEHLFDAIADALGKGYH</sequence>
<reference key="1">
    <citation type="journal article" date="1986" name="J. Mol. Evol.">
        <title>Globin evolution in the genus Xenopus: comparative analysis of cDNAs coding for adult globin polypeptides of Xenopus borealis and Xenopus tropicalis.</title>
        <authorList>
            <person name="Knoechel W."/>
            <person name="Korge E."/>
            <person name="Basner A."/>
            <person name="Meyerhof W."/>
        </authorList>
    </citation>
    <scope>NUCLEOTIDE SEQUENCE [MRNA]</scope>
</reference>
<feature type="initiator methionine" description="Removed">
    <location>
        <position position="1"/>
    </location>
</feature>
<feature type="chain" id="PRO_0000053154" description="Hemoglobin subunit beta-2">
    <location>
        <begin position="2"/>
        <end position="146"/>
    </location>
</feature>
<feature type="domain" description="Globin" evidence="1">
    <location>
        <begin position="2"/>
        <end position="146"/>
    </location>
</feature>
<feature type="binding site" description="distal binding residue">
    <location>
        <position position="63"/>
    </location>
    <ligand>
        <name>heme b</name>
        <dbReference type="ChEBI" id="CHEBI:60344"/>
    </ligand>
    <ligandPart>
        <name>Fe</name>
        <dbReference type="ChEBI" id="CHEBI:18248"/>
    </ligandPart>
</feature>
<feature type="binding site" description="proximal binding residue">
    <location>
        <position position="92"/>
    </location>
    <ligand>
        <name>heme b</name>
        <dbReference type="ChEBI" id="CHEBI:60344"/>
    </ligand>
    <ligandPart>
        <name>Fe</name>
        <dbReference type="ChEBI" id="CHEBI:18248"/>
    </ligandPart>
</feature>